<feature type="propeptide" id="PRO_0000005879" evidence="1">
    <location>
        <begin position="1"/>
        <end position="24"/>
    </location>
</feature>
<feature type="peptide" id="PRO_0000005880" description="Competence-stimulating peptide">
    <location>
        <begin position="25"/>
        <end position="41"/>
    </location>
</feature>
<gene>
    <name type="primary">comC</name>
</gene>
<sequence length="41" mass="4961">MKNTVKLEQFKEVTEAELQEIRGGDWRISETIRNLIFPRRK</sequence>
<organism>
    <name type="scientific">Streptococcus oralis</name>
    <dbReference type="NCBI Taxonomy" id="1303"/>
    <lineage>
        <taxon>Bacteria</taxon>
        <taxon>Bacillati</taxon>
        <taxon>Bacillota</taxon>
        <taxon>Bacilli</taxon>
        <taxon>Lactobacillales</taxon>
        <taxon>Streptococcaceae</taxon>
        <taxon>Streptococcus</taxon>
    </lineage>
</organism>
<protein>
    <recommendedName>
        <fullName>Competence-stimulating peptide</fullName>
        <shortName>CSP</shortName>
    </recommendedName>
</protein>
<evidence type="ECO:0000255" key="1"/>
<evidence type="ECO:0000305" key="2"/>
<comment type="function">
    <text>Acts as a pheromone, induces cells to develop competence for genetic transformation.</text>
</comment>
<comment type="subcellular location">
    <subcellularLocation>
        <location>Secreted</location>
    </subcellularLocation>
</comment>
<comment type="similarity">
    <text evidence="2">Belongs to the ComC family.</text>
</comment>
<name>CSP2_STROR</name>
<keyword id="KW-0178">Competence</keyword>
<keyword id="KW-0588">Pheromone</keyword>
<keyword id="KW-0964">Secreted</keyword>
<accession>O33690</accession>
<reference key="1">
    <citation type="journal article" date="1997" name="J. Bacteriol.">
        <title>Natural competence in the genus Streptococcus: evidence that streptococci can change pherotype by interspecies recombinational exchanges.</title>
        <authorList>
            <person name="Haevarstein L.S."/>
            <person name="Hakenbeck R."/>
            <person name="Gaustad P."/>
        </authorList>
    </citation>
    <scope>NUCLEOTIDE SEQUENCE [GENOMIC DNA]</scope>
    <source>
        <strain>DSM 20066 / 25826</strain>
    </source>
</reference>
<dbReference type="EMBL" id="AJ000874">
    <property type="protein sequence ID" value="CAA04364.1"/>
    <property type="molecule type" value="Genomic_DNA"/>
</dbReference>
<dbReference type="RefSeq" id="WP_000799678.1">
    <property type="nucleotide sequence ID" value="NZ_VOXA01000097.1"/>
</dbReference>
<dbReference type="STRING" id="1303.SORDD17_01790"/>
<dbReference type="GO" id="GO:0005576">
    <property type="term" value="C:extracellular region"/>
    <property type="evidence" value="ECO:0007669"/>
    <property type="project" value="UniProtKB-SubCell"/>
</dbReference>
<dbReference type="GO" id="GO:0005186">
    <property type="term" value="F:pheromone activity"/>
    <property type="evidence" value="ECO:0007669"/>
    <property type="project" value="UniProtKB-KW"/>
</dbReference>
<dbReference type="GO" id="GO:0030420">
    <property type="term" value="P:establishment of competence for transformation"/>
    <property type="evidence" value="ECO:0007669"/>
    <property type="project" value="UniProtKB-KW"/>
</dbReference>
<dbReference type="InterPro" id="IPR010133">
    <property type="entry name" value="Bacteriocin_signal_seq"/>
</dbReference>
<dbReference type="InterPro" id="IPR004288">
    <property type="entry name" value="Competence_ComC"/>
</dbReference>
<dbReference type="NCBIfam" id="TIGR01847">
    <property type="entry name" value="bacteriocin_sig"/>
    <property type="match status" value="1"/>
</dbReference>
<dbReference type="NCBIfam" id="NF033214">
    <property type="entry name" value="ComC_Streptocco"/>
    <property type="match status" value="1"/>
</dbReference>
<dbReference type="Pfam" id="PF03047">
    <property type="entry name" value="ComC"/>
    <property type="match status" value="1"/>
</dbReference>
<proteinExistence type="inferred from homology"/>